<keyword id="KW-0665">Pyrimidine biosynthesis</keyword>
<keyword id="KW-0808">Transferase</keyword>
<accession>Q4ZZ70</accession>
<evidence type="ECO:0000255" key="1">
    <source>
        <dbReference type="HAMAP-Rule" id="MF_00001"/>
    </source>
</evidence>
<feature type="chain" id="PRO_0000321144" description="Aspartate carbamoyltransferase catalytic subunit">
    <location>
        <begin position="1"/>
        <end position="334"/>
    </location>
</feature>
<feature type="binding site" evidence="1">
    <location>
        <position position="71"/>
    </location>
    <ligand>
        <name>carbamoyl phosphate</name>
        <dbReference type="ChEBI" id="CHEBI:58228"/>
    </ligand>
</feature>
<feature type="binding site" evidence="1">
    <location>
        <position position="72"/>
    </location>
    <ligand>
        <name>carbamoyl phosphate</name>
        <dbReference type="ChEBI" id="CHEBI:58228"/>
    </ligand>
</feature>
<feature type="binding site" evidence="1">
    <location>
        <position position="99"/>
    </location>
    <ligand>
        <name>L-aspartate</name>
        <dbReference type="ChEBI" id="CHEBI:29991"/>
    </ligand>
</feature>
<feature type="binding site" evidence="1">
    <location>
        <position position="121"/>
    </location>
    <ligand>
        <name>carbamoyl phosphate</name>
        <dbReference type="ChEBI" id="CHEBI:58228"/>
    </ligand>
</feature>
<feature type="binding site" evidence="1">
    <location>
        <position position="151"/>
    </location>
    <ligand>
        <name>carbamoyl phosphate</name>
        <dbReference type="ChEBI" id="CHEBI:58228"/>
    </ligand>
</feature>
<feature type="binding site" evidence="1">
    <location>
        <position position="154"/>
    </location>
    <ligand>
        <name>carbamoyl phosphate</name>
        <dbReference type="ChEBI" id="CHEBI:58228"/>
    </ligand>
</feature>
<feature type="binding site" evidence="1">
    <location>
        <position position="184"/>
    </location>
    <ligand>
        <name>L-aspartate</name>
        <dbReference type="ChEBI" id="CHEBI:29991"/>
    </ligand>
</feature>
<feature type="binding site" evidence="1">
    <location>
        <position position="239"/>
    </location>
    <ligand>
        <name>L-aspartate</name>
        <dbReference type="ChEBI" id="CHEBI:29991"/>
    </ligand>
</feature>
<feature type="binding site" evidence="1">
    <location>
        <position position="280"/>
    </location>
    <ligand>
        <name>carbamoyl phosphate</name>
        <dbReference type="ChEBI" id="CHEBI:58228"/>
    </ligand>
</feature>
<feature type="binding site" evidence="1">
    <location>
        <position position="281"/>
    </location>
    <ligand>
        <name>carbamoyl phosphate</name>
        <dbReference type="ChEBI" id="CHEBI:58228"/>
    </ligand>
</feature>
<protein>
    <recommendedName>
        <fullName evidence="1">Aspartate carbamoyltransferase catalytic subunit</fullName>
        <ecNumber evidence="1">2.1.3.2</ecNumber>
    </recommendedName>
    <alternativeName>
        <fullName evidence="1">Aspartate transcarbamylase</fullName>
        <shortName evidence="1">ATCase</shortName>
    </alternativeName>
</protein>
<dbReference type="EC" id="2.1.3.2" evidence="1"/>
<dbReference type="EMBL" id="CP000075">
    <property type="protein sequence ID" value="AAY35552.1"/>
    <property type="molecule type" value="Genomic_DNA"/>
</dbReference>
<dbReference type="RefSeq" id="WP_003366142.1">
    <property type="nucleotide sequence ID" value="NC_007005.1"/>
</dbReference>
<dbReference type="RefSeq" id="YP_233590.1">
    <property type="nucleotide sequence ID" value="NC_007005.1"/>
</dbReference>
<dbReference type="SMR" id="Q4ZZ70"/>
<dbReference type="STRING" id="205918.Psyr_0482"/>
<dbReference type="KEGG" id="psb:Psyr_0482"/>
<dbReference type="PATRIC" id="fig|205918.7.peg.501"/>
<dbReference type="eggNOG" id="COG0540">
    <property type="taxonomic scope" value="Bacteria"/>
</dbReference>
<dbReference type="HOGENOM" id="CLU_043846_2_0_6"/>
<dbReference type="OrthoDB" id="9774690at2"/>
<dbReference type="UniPathway" id="UPA00070">
    <property type="reaction ID" value="UER00116"/>
</dbReference>
<dbReference type="Proteomes" id="UP000000426">
    <property type="component" value="Chromosome"/>
</dbReference>
<dbReference type="GO" id="GO:0005829">
    <property type="term" value="C:cytosol"/>
    <property type="evidence" value="ECO:0007669"/>
    <property type="project" value="TreeGrafter"/>
</dbReference>
<dbReference type="GO" id="GO:0016597">
    <property type="term" value="F:amino acid binding"/>
    <property type="evidence" value="ECO:0007669"/>
    <property type="project" value="InterPro"/>
</dbReference>
<dbReference type="GO" id="GO:0004070">
    <property type="term" value="F:aspartate carbamoyltransferase activity"/>
    <property type="evidence" value="ECO:0007669"/>
    <property type="project" value="UniProtKB-UniRule"/>
</dbReference>
<dbReference type="GO" id="GO:0006207">
    <property type="term" value="P:'de novo' pyrimidine nucleobase biosynthetic process"/>
    <property type="evidence" value="ECO:0007669"/>
    <property type="project" value="InterPro"/>
</dbReference>
<dbReference type="GO" id="GO:0044205">
    <property type="term" value="P:'de novo' UMP biosynthetic process"/>
    <property type="evidence" value="ECO:0007669"/>
    <property type="project" value="UniProtKB-UniRule"/>
</dbReference>
<dbReference type="GO" id="GO:0006520">
    <property type="term" value="P:amino acid metabolic process"/>
    <property type="evidence" value="ECO:0007669"/>
    <property type="project" value="InterPro"/>
</dbReference>
<dbReference type="FunFam" id="3.40.50.1370:FF:000006">
    <property type="entry name" value="Aspartate carbamoyltransferase"/>
    <property type="match status" value="1"/>
</dbReference>
<dbReference type="Gene3D" id="3.40.50.1370">
    <property type="entry name" value="Aspartate/ornithine carbamoyltransferase"/>
    <property type="match status" value="2"/>
</dbReference>
<dbReference type="HAMAP" id="MF_00001">
    <property type="entry name" value="Asp_carb_tr"/>
    <property type="match status" value="1"/>
</dbReference>
<dbReference type="InterPro" id="IPR006132">
    <property type="entry name" value="Asp/Orn_carbamoyltranf_P-bd"/>
</dbReference>
<dbReference type="InterPro" id="IPR006130">
    <property type="entry name" value="Asp/Orn_carbamoylTrfase"/>
</dbReference>
<dbReference type="InterPro" id="IPR036901">
    <property type="entry name" value="Asp/Orn_carbamoylTrfase_sf"/>
</dbReference>
<dbReference type="InterPro" id="IPR002082">
    <property type="entry name" value="Asp_carbamoyltransf"/>
</dbReference>
<dbReference type="InterPro" id="IPR006131">
    <property type="entry name" value="Asp_carbamoyltransf_Asp/Orn-bd"/>
</dbReference>
<dbReference type="NCBIfam" id="TIGR00670">
    <property type="entry name" value="asp_carb_tr"/>
    <property type="match status" value="1"/>
</dbReference>
<dbReference type="NCBIfam" id="NF002032">
    <property type="entry name" value="PRK00856.1"/>
    <property type="match status" value="1"/>
</dbReference>
<dbReference type="PANTHER" id="PTHR45753:SF6">
    <property type="entry name" value="ASPARTATE CARBAMOYLTRANSFERASE"/>
    <property type="match status" value="1"/>
</dbReference>
<dbReference type="PANTHER" id="PTHR45753">
    <property type="entry name" value="ORNITHINE CARBAMOYLTRANSFERASE, MITOCHONDRIAL"/>
    <property type="match status" value="1"/>
</dbReference>
<dbReference type="Pfam" id="PF00185">
    <property type="entry name" value="OTCace"/>
    <property type="match status" value="1"/>
</dbReference>
<dbReference type="Pfam" id="PF02729">
    <property type="entry name" value="OTCace_N"/>
    <property type="match status" value="1"/>
</dbReference>
<dbReference type="PRINTS" id="PR00100">
    <property type="entry name" value="AOTCASE"/>
</dbReference>
<dbReference type="PRINTS" id="PR00101">
    <property type="entry name" value="ATCASE"/>
</dbReference>
<dbReference type="SUPFAM" id="SSF53671">
    <property type="entry name" value="Aspartate/ornithine carbamoyltransferase"/>
    <property type="match status" value="1"/>
</dbReference>
<dbReference type="PROSITE" id="PS00097">
    <property type="entry name" value="CARBAMOYLTRANSFERASE"/>
    <property type="match status" value="1"/>
</dbReference>
<name>PYRB_PSEU2</name>
<sequence>MTPLDAKRPLQLNHLGQLRHFLSLDGLPRELLTEILDTADSFLEVGARAVKKVPLLRGKTVCNVFFENSTRTRTTFELAAQRLSADVITLNVSTSSTSKGETLFDTLRNLEAMAADMFVVRHADSGAAHFIAEHVCPDVAIINGGDGRHAHPTQGMLDMLTIRRHKGGFENLSVAIVGDILHSRVARSNMLALKALGCPDIRVIGPKTLLPVGVEQYGVKVYTDLNEGLKDVDVVIMLRLQRERMTGGLLPSEGEFYRLFGLTTARLAAAKPDAIVMHPGPINRGVEIESAVADGAHSVILNQVTYGIAIRMAVLSMAMSGQNAQRQFEQENAQ</sequence>
<gene>
    <name evidence="1" type="primary">pyrB</name>
    <name type="ordered locus">Psyr_0482</name>
</gene>
<organism>
    <name type="scientific">Pseudomonas syringae pv. syringae (strain B728a)</name>
    <dbReference type="NCBI Taxonomy" id="205918"/>
    <lineage>
        <taxon>Bacteria</taxon>
        <taxon>Pseudomonadati</taxon>
        <taxon>Pseudomonadota</taxon>
        <taxon>Gammaproteobacteria</taxon>
        <taxon>Pseudomonadales</taxon>
        <taxon>Pseudomonadaceae</taxon>
        <taxon>Pseudomonas</taxon>
        <taxon>Pseudomonas syringae</taxon>
    </lineage>
</organism>
<reference key="1">
    <citation type="journal article" date="2005" name="Proc. Natl. Acad. Sci. U.S.A.">
        <title>Comparison of the complete genome sequences of Pseudomonas syringae pv. syringae B728a and pv. tomato DC3000.</title>
        <authorList>
            <person name="Feil H."/>
            <person name="Feil W.S."/>
            <person name="Chain P."/>
            <person name="Larimer F."/>
            <person name="Dibartolo G."/>
            <person name="Copeland A."/>
            <person name="Lykidis A."/>
            <person name="Trong S."/>
            <person name="Nolan M."/>
            <person name="Goltsman E."/>
            <person name="Thiel J."/>
            <person name="Malfatti S."/>
            <person name="Loper J.E."/>
            <person name="Lapidus A."/>
            <person name="Detter J.C."/>
            <person name="Land M."/>
            <person name="Richardson P.M."/>
            <person name="Kyrpides N.C."/>
            <person name="Ivanova N."/>
            <person name="Lindow S.E."/>
        </authorList>
    </citation>
    <scope>NUCLEOTIDE SEQUENCE [LARGE SCALE GENOMIC DNA]</scope>
    <source>
        <strain>B728a</strain>
    </source>
</reference>
<proteinExistence type="inferred from homology"/>
<comment type="function">
    <text evidence="1">Catalyzes the condensation of carbamoyl phosphate and aspartate to form carbamoyl aspartate and inorganic phosphate, the committed step in the de novo pyrimidine nucleotide biosynthesis pathway.</text>
</comment>
<comment type="catalytic activity">
    <reaction evidence="1">
        <text>carbamoyl phosphate + L-aspartate = N-carbamoyl-L-aspartate + phosphate + H(+)</text>
        <dbReference type="Rhea" id="RHEA:20013"/>
        <dbReference type="ChEBI" id="CHEBI:15378"/>
        <dbReference type="ChEBI" id="CHEBI:29991"/>
        <dbReference type="ChEBI" id="CHEBI:32814"/>
        <dbReference type="ChEBI" id="CHEBI:43474"/>
        <dbReference type="ChEBI" id="CHEBI:58228"/>
        <dbReference type="EC" id="2.1.3.2"/>
    </reaction>
</comment>
<comment type="pathway">
    <text evidence="1">Pyrimidine metabolism; UMP biosynthesis via de novo pathway; (S)-dihydroorotate from bicarbonate: step 2/3.</text>
</comment>
<comment type="subunit">
    <text evidence="1">Heterododecamer (2C3:3R2) of six catalytic PyrB chains organized as two trimers (C3), and six regulatory PyrI chains organized as three dimers (R2).</text>
</comment>
<comment type="similarity">
    <text evidence="1">Belongs to the aspartate/ornithine carbamoyltransferase superfamily. ATCase family.</text>
</comment>